<sequence length="40" mass="4131">MADTTGRIPLWIIGTVAGILVIGLIGIFFYGSYSGLGSSL</sequence>
<name>PSBJ_NICTO</name>
<reference key="1">
    <citation type="journal article" date="2006" name="Mol. Genet. Genomics">
        <title>The chloroplast genome of Nicotiana sylvestris and Nicotiana tomentosiformis: complete sequencing confirms that the Nicotiana sylvestris progenitor is the maternal genome donor of Nicotiana tabacum.</title>
        <authorList>
            <person name="Yukawa M."/>
            <person name="Tsudzuki T."/>
            <person name="Sugiura M."/>
        </authorList>
    </citation>
    <scope>NUCLEOTIDE SEQUENCE [LARGE SCALE GENOMIC DNA]</scope>
</reference>
<organism>
    <name type="scientific">Nicotiana tomentosiformis</name>
    <name type="common">Tobacco</name>
    <dbReference type="NCBI Taxonomy" id="4098"/>
    <lineage>
        <taxon>Eukaryota</taxon>
        <taxon>Viridiplantae</taxon>
        <taxon>Streptophyta</taxon>
        <taxon>Embryophyta</taxon>
        <taxon>Tracheophyta</taxon>
        <taxon>Spermatophyta</taxon>
        <taxon>Magnoliopsida</taxon>
        <taxon>eudicotyledons</taxon>
        <taxon>Gunneridae</taxon>
        <taxon>Pentapetalae</taxon>
        <taxon>asterids</taxon>
        <taxon>lamiids</taxon>
        <taxon>Solanales</taxon>
        <taxon>Solanaceae</taxon>
        <taxon>Nicotianoideae</taxon>
        <taxon>Nicotianeae</taxon>
        <taxon>Nicotiana</taxon>
    </lineage>
</organism>
<feature type="chain" id="PRO_0000276104" description="Photosystem II reaction center protein J">
    <location>
        <begin position="1"/>
        <end position="40"/>
    </location>
</feature>
<feature type="transmembrane region" description="Helical" evidence="1">
    <location>
        <begin position="8"/>
        <end position="28"/>
    </location>
</feature>
<gene>
    <name evidence="1" type="primary">psbJ</name>
</gene>
<protein>
    <recommendedName>
        <fullName evidence="1">Photosystem II reaction center protein J</fullName>
        <shortName evidence="1">PSII-J</shortName>
    </recommendedName>
</protein>
<accession>Q33C18</accession>
<evidence type="ECO:0000255" key="1">
    <source>
        <dbReference type="HAMAP-Rule" id="MF_01305"/>
    </source>
</evidence>
<dbReference type="EMBL" id="AB240139">
    <property type="protein sequence ID" value="BAE48017.1"/>
    <property type="molecule type" value="Genomic_DNA"/>
</dbReference>
<dbReference type="RefSeq" id="YP_398879.1">
    <property type="nucleotide sequence ID" value="NC_007602.1"/>
</dbReference>
<dbReference type="SMR" id="Q33C18"/>
<dbReference type="GeneID" id="3776281"/>
<dbReference type="KEGG" id="nto:3776281"/>
<dbReference type="GO" id="GO:0009535">
    <property type="term" value="C:chloroplast thylakoid membrane"/>
    <property type="evidence" value="ECO:0007669"/>
    <property type="project" value="UniProtKB-SubCell"/>
</dbReference>
<dbReference type="GO" id="GO:0009539">
    <property type="term" value="C:photosystem II reaction center"/>
    <property type="evidence" value="ECO:0007669"/>
    <property type="project" value="InterPro"/>
</dbReference>
<dbReference type="GO" id="GO:0015979">
    <property type="term" value="P:photosynthesis"/>
    <property type="evidence" value="ECO:0007669"/>
    <property type="project" value="UniProtKB-UniRule"/>
</dbReference>
<dbReference type="Gene3D" id="6.10.250.2070">
    <property type="match status" value="1"/>
</dbReference>
<dbReference type="HAMAP" id="MF_01305">
    <property type="entry name" value="PSII_PsbJ"/>
    <property type="match status" value="1"/>
</dbReference>
<dbReference type="InterPro" id="IPR002682">
    <property type="entry name" value="PSII_PsbJ"/>
</dbReference>
<dbReference type="InterPro" id="IPR037267">
    <property type="entry name" value="PSII_PsbJ_sf"/>
</dbReference>
<dbReference type="NCBIfam" id="NF002722">
    <property type="entry name" value="PRK02565.1"/>
    <property type="match status" value="1"/>
</dbReference>
<dbReference type="PANTHER" id="PTHR34812">
    <property type="entry name" value="PHOTOSYSTEM II REACTION CENTER PROTEIN J"/>
    <property type="match status" value="1"/>
</dbReference>
<dbReference type="PANTHER" id="PTHR34812:SF3">
    <property type="entry name" value="PHOTOSYSTEM II REACTION CENTER PROTEIN J"/>
    <property type="match status" value="1"/>
</dbReference>
<dbReference type="Pfam" id="PF01788">
    <property type="entry name" value="PsbJ"/>
    <property type="match status" value="1"/>
</dbReference>
<dbReference type="SUPFAM" id="SSF161021">
    <property type="entry name" value="Photosystem II reaction center protein J, PsbJ"/>
    <property type="match status" value="1"/>
</dbReference>
<keyword id="KW-0150">Chloroplast</keyword>
<keyword id="KW-0472">Membrane</keyword>
<keyword id="KW-0602">Photosynthesis</keyword>
<keyword id="KW-0604">Photosystem II</keyword>
<keyword id="KW-0934">Plastid</keyword>
<keyword id="KW-0674">Reaction center</keyword>
<keyword id="KW-0793">Thylakoid</keyword>
<keyword id="KW-0812">Transmembrane</keyword>
<keyword id="KW-1133">Transmembrane helix</keyword>
<comment type="function">
    <text evidence="1">One of the components of the core complex of photosystem II (PSII). PSII is a light-driven water:plastoquinone oxidoreductase that uses light energy to abstract electrons from H(2)O, generating O(2) and a proton gradient subsequently used for ATP formation. It consists of a core antenna complex that captures photons, and an electron transfer chain that converts photonic excitation into a charge separation.</text>
</comment>
<comment type="subunit">
    <text evidence="1">PSII is composed of 1 copy each of membrane proteins PsbA, PsbB, PsbC, PsbD, PsbE, PsbF, PsbH, PsbI, PsbJ, PsbK, PsbL, PsbM, PsbT, PsbX, PsbY, PsbZ, Psb30/Ycf12, at least 3 peripheral proteins of the oxygen-evolving complex and a large number of cofactors. It forms dimeric complexes.</text>
</comment>
<comment type="subcellular location">
    <subcellularLocation>
        <location evidence="1">Plastid</location>
        <location evidence="1">Chloroplast thylakoid membrane</location>
        <topology evidence="1">Single-pass membrane protein</topology>
    </subcellularLocation>
</comment>
<comment type="similarity">
    <text evidence="1">Belongs to the PsbJ family.</text>
</comment>
<geneLocation type="chloroplast"/>
<proteinExistence type="inferred from homology"/>